<feature type="chain" id="PRO_0000375201" description="mRNA cleavage and polyadenylation factor CLP1">
    <location>
        <begin position="1"/>
        <end position="497"/>
    </location>
</feature>
<feature type="region of interest" description="Disordered" evidence="2">
    <location>
        <begin position="1"/>
        <end position="20"/>
    </location>
</feature>
<feature type="binding site" evidence="1">
    <location>
        <position position="29"/>
    </location>
    <ligand>
        <name>ATP</name>
        <dbReference type="ChEBI" id="CHEBI:30616"/>
    </ligand>
</feature>
<feature type="binding site" evidence="1">
    <location>
        <begin position="168"/>
        <end position="173"/>
    </location>
    <ligand>
        <name>ATP</name>
        <dbReference type="ChEBI" id="CHEBI:30616"/>
    </ligand>
</feature>
<reference key="1">
    <citation type="journal article" date="2015" name="Genome Announc.">
        <title>Draft genome sequence of the cellulolytic fungus Chaetomium globosum.</title>
        <authorList>
            <person name="Cuomo C.A."/>
            <person name="Untereiner W.A."/>
            <person name="Ma L.-J."/>
            <person name="Grabherr M."/>
            <person name="Birren B.W."/>
        </authorList>
    </citation>
    <scope>NUCLEOTIDE SEQUENCE [LARGE SCALE GENOMIC DNA]</scope>
    <source>
        <strain>ATCC 6205 / CBS 148.51 / DSM 1962 / NBRC 6347 / NRRL 1970</strain>
    </source>
</reference>
<keyword id="KW-0067">ATP-binding</keyword>
<keyword id="KW-0507">mRNA processing</keyword>
<keyword id="KW-0547">Nucleotide-binding</keyword>
<keyword id="KW-0539">Nucleus</keyword>
<keyword id="KW-1185">Reference proteome</keyword>
<gene>
    <name evidence="1" type="primary">CLP1</name>
    <name type="ORF">CHGG_04336</name>
</gene>
<name>CLP1_CHAGB</name>
<protein>
    <recommendedName>
        <fullName evidence="1">mRNA cleavage and polyadenylation factor CLP1</fullName>
    </recommendedName>
</protein>
<proteinExistence type="inferred from homology"/>
<evidence type="ECO:0000255" key="1">
    <source>
        <dbReference type="HAMAP-Rule" id="MF_03035"/>
    </source>
</evidence>
<evidence type="ECO:0000256" key="2">
    <source>
        <dbReference type="SAM" id="MobiDB-lite"/>
    </source>
</evidence>
<evidence type="ECO:0000305" key="3"/>
<dbReference type="EMBL" id="CH408032">
    <property type="protein sequence ID" value="EAQ87717.1"/>
    <property type="molecule type" value="Genomic_DNA"/>
</dbReference>
<dbReference type="RefSeq" id="XP_001223550.1">
    <property type="nucleotide sequence ID" value="XM_001223549.1"/>
</dbReference>
<dbReference type="SMR" id="Q2H1L0"/>
<dbReference type="FunCoup" id="Q2H1L0">
    <property type="interactions" value="718"/>
</dbReference>
<dbReference type="STRING" id="306901.Q2H1L0"/>
<dbReference type="GeneID" id="4391675"/>
<dbReference type="VEuPathDB" id="FungiDB:CHGG_04336"/>
<dbReference type="eggNOG" id="KOG2749">
    <property type="taxonomic scope" value="Eukaryota"/>
</dbReference>
<dbReference type="HOGENOM" id="CLU_018195_3_1_1"/>
<dbReference type="InParanoid" id="Q2H1L0"/>
<dbReference type="OMA" id="VQYVNCH"/>
<dbReference type="OrthoDB" id="258143at2759"/>
<dbReference type="Proteomes" id="UP000001056">
    <property type="component" value="Unassembled WGS sequence"/>
</dbReference>
<dbReference type="GO" id="GO:0005849">
    <property type="term" value="C:mRNA cleavage factor complex"/>
    <property type="evidence" value="ECO:0007669"/>
    <property type="project" value="UniProtKB-UniRule"/>
</dbReference>
<dbReference type="GO" id="GO:0005524">
    <property type="term" value="F:ATP binding"/>
    <property type="evidence" value="ECO:0007669"/>
    <property type="project" value="UniProtKB-UniRule"/>
</dbReference>
<dbReference type="GO" id="GO:0051731">
    <property type="term" value="F:polynucleotide 5'-hydroxyl-kinase activity"/>
    <property type="evidence" value="ECO:0007669"/>
    <property type="project" value="InterPro"/>
</dbReference>
<dbReference type="GO" id="GO:0031124">
    <property type="term" value="P:mRNA 3'-end processing"/>
    <property type="evidence" value="ECO:0007669"/>
    <property type="project" value="UniProtKB-UniRule"/>
</dbReference>
<dbReference type="GO" id="GO:0006388">
    <property type="term" value="P:tRNA splicing, via endonucleolytic cleavage and ligation"/>
    <property type="evidence" value="ECO:0007669"/>
    <property type="project" value="TreeGrafter"/>
</dbReference>
<dbReference type="Gene3D" id="2.60.120.1030">
    <property type="entry name" value="Clp1, DNA binding domain"/>
    <property type="match status" value="1"/>
</dbReference>
<dbReference type="Gene3D" id="3.40.50.300">
    <property type="entry name" value="P-loop containing nucleotide triphosphate hydrolases"/>
    <property type="match status" value="1"/>
</dbReference>
<dbReference type="Gene3D" id="2.40.30.330">
    <property type="entry name" value="Pre-mRNA cleavage complex subunit Clp1, C-terminal domain"/>
    <property type="match status" value="1"/>
</dbReference>
<dbReference type="HAMAP" id="MF_03035">
    <property type="entry name" value="Clp1"/>
    <property type="match status" value="1"/>
</dbReference>
<dbReference type="InterPro" id="IPR028606">
    <property type="entry name" value="Clp1"/>
</dbReference>
<dbReference type="InterPro" id="IPR045116">
    <property type="entry name" value="Clp1/Grc3"/>
</dbReference>
<dbReference type="InterPro" id="IPR010655">
    <property type="entry name" value="Clp1_C"/>
</dbReference>
<dbReference type="InterPro" id="IPR038238">
    <property type="entry name" value="Clp1_C_sf"/>
</dbReference>
<dbReference type="InterPro" id="IPR032324">
    <property type="entry name" value="Clp1_N"/>
</dbReference>
<dbReference type="InterPro" id="IPR038239">
    <property type="entry name" value="Clp1_N_sf"/>
</dbReference>
<dbReference type="InterPro" id="IPR032319">
    <property type="entry name" value="CLP1_P"/>
</dbReference>
<dbReference type="InterPro" id="IPR027417">
    <property type="entry name" value="P-loop_NTPase"/>
</dbReference>
<dbReference type="PANTHER" id="PTHR12755">
    <property type="entry name" value="CLEAVAGE/POLYADENYLATION FACTOR IA SUBUNIT CLP1P"/>
    <property type="match status" value="1"/>
</dbReference>
<dbReference type="PANTHER" id="PTHR12755:SF6">
    <property type="entry name" value="POLYRIBONUCLEOTIDE 5'-HYDROXYL-KINASE CLP1"/>
    <property type="match status" value="1"/>
</dbReference>
<dbReference type="Pfam" id="PF06807">
    <property type="entry name" value="Clp1"/>
    <property type="match status" value="1"/>
</dbReference>
<dbReference type="Pfam" id="PF16573">
    <property type="entry name" value="CLP1_N"/>
    <property type="match status" value="1"/>
</dbReference>
<dbReference type="Pfam" id="PF16575">
    <property type="entry name" value="CLP1_P"/>
    <property type="match status" value="1"/>
</dbReference>
<dbReference type="SUPFAM" id="SSF52540">
    <property type="entry name" value="P-loop containing nucleoside triphosphate hydrolases"/>
    <property type="match status" value="1"/>
</dbReference>
<comment type="function">
    <text evidence="1">Required for endonucleolytic cleavage during polyadenylation-dependent pre-mRNA 3'-end formation.</text>
</comment>
<comment type="subunit">
    <text evidence="1">Component of a pre-mRNA cleavage factor complex. Interacts directly with PCF11.</text>
</comment>
<comment type="subcellular location">
    <subcellularLocation>
        <location evidence="1">Nucleus</location>
    </subcellularLocation>
</comment>
<comment type="similarity">
    <text evidence="1">Belongs to the Clp1 family. Clp1 subfamily.</text>
</comment>
<comment type="caution">
    <text evidence="3">May lack the polyribonucleotide 5'-hydroxyl-kinase and polynucleotide 5'-hydroxyl-kinase activities that are characteristic of the human ortholog.</text>
</comment>
<accession>Q2H1L0</accession>
<organism>
    <name type="scientific">Chaetomium globosum (strain ATCC 6205 / CBS 148.51 / DSM 1962 / NBRC 6347 / NRRL 1970)</name>
    <name type="common">Soil fungus</name>
    <dbReference type="NCBI Taxonomy" id="306901"/>
    <lineage>
        <taxon>Eukaryota</taxon>
        <taxon>Fungi</taxon>
        <taxon>Dikarya</taxon>
        <taxon>Ascomycota</taxon>
        <taxon>Pezizomycotina</taxon>
        <taxon>Sordariomycetes</taxon>
        <taxon>Sordariomycetidae</taxon>
        <taxon>Sordariales</taxon>
        <taxon>Chaetomiaceae</taxon>
        <taxon>Chaetomium</taxon>
    </lineage>
</organism>
<sequence>MSIPGLGQIAPQQPTTSTTRTITLRPFWEWRFEVPRSSIPTTNAAISAIGLGGAGAGGGGATVRLTSGTAERDGTELALNRTYTFPRNTQSKLLTYTGATLEVSGAFVDSVAQYPAPEASPQLPVLNLHFALQELRAAAAAGGSNHNNNNTNGGGAPGPRVMICGEKDSGKTTVARTLAALATRAGGQPLVGSVDPREGMLALPGTVSAAVFGTVMDVEDPAAGFGVSGTPSSGPSAVPVKLPMVYYVGRERVDEDVPLWRDLVGKLGSAVRDKFAADEVVREAGLLLDTPAASVAKGDLEVLTHVVNEFAGGLLGAGRTAGWQLTVTVNIVVVLGSVDLHAELQRRFENQRTVHGEAITLILLDKSDGVAERDKDFMKFTREAAIKEYFFGDAKRTLSPFTQSVSFDDVAVFRTPDALERAEVSAEMSHWTLAVMNASVNDPPEVIRQAPVMGFVAIADVDEDRRRLKVLSPVSGRLGNRPMIWGRWPEPYINLLG</sequence>